<organism>
    <name type="scientific">Solidesulfovibrio magneticus (strain ATCC 700980 / DSM 13731 / RS-1)</name>
    <name type="common">Desulfovibrio magneticus</name>
    <dbReference type="NCBI Taxonomy" id="573370"/>
    <lineage>
        <taxon>Bacteria</taxon>
        <taxon>Pseudomonadati</taxon>
        <taxon>Thermodesulfobacteriota</taxon>
        <taxon>Desulfovibrionia</taxon>
        <taxon>Desulfovibrionales</taxon>
        <taxon>Desulfovibrionaceae</taxon>
        <taxon>Solidesulfovibrio</taxon>
    </lineage>
</organism>
<name>TGT_SOLM1</name>
<sequence length="373" mass="41167">MNAPGTFTLGPGDGSARTARLTTAHGEIETPVFMPVGTQGTVKSLCPTDLQDIKARIILGNTYHLYLRPGDELVAKLGGLHRFMGWDGPILTDSGGFQVFSLSGLRRITEEGVTFASHIDGSKHLFSPEKVVSIQRNLGSDIMMVLDECVPYGADRAYTEKSLGLTTRWARRCRKAHPAGDRGQLMFGIVQGGFFKDLRAQSAEQIIEVGFDGYALGGLSVGESRAEMYDILGDAAPLLPADRPRYLMGVGAPRDLLAGMAAGIDMFDCVLPTRNARNGTLFTFQGKVNIKRAEYREDDSPLDPTCPCYACRTFSRAYLRHLYIAKELLSYRLNTLHNLTFFSIMMERARQAIREGRFAAYRAEMEALYPEGE</sequence>
<comment type="function">
    <text evidence="1">Catalyzes the base-exchange of a guanine (G) residue with the queuine precursor 7-aminomethyl-7-deazaguanine (PreQ1) at position 34 (anticodon wobble position) in tRNAs with GU(N) anticodons (tRNA-Asp, -Asn, -His and -Tyr). Catalysis occurs through a double-displacement mechanism. The nucleophile active site attacks the C1' of nucleotide 34 to detach the guanine base from the RNA, forming a covalent enzyme-RNA intermediate. The proton acceptor active site deprotonates the incoming PreQ1, allowing a nucleophilic attack on the C1' of the ribose to form the product. After dissociation, two additional enzymatic reactions on the tRNA convert PreQ1 to queuine (Q), resulting in the hypermodified nucleoside queuosine (7-(((4,5-cis-dihydroxy-2-cyclopenten-1-yl)amino)methyl)-7-deazaguanosine).</text>
</comment>
<comment type="catalytic activity">
    <reaction evidence="1">
        <text>7-aminomethyl-7-carbaguanine + guanosine(34) in tRNA = 7-aminomethyl-7-carbaguanosine(34) in tRNA + guanine</text>
        <dbReference type="Rhea" id="RHEA:24104"/>
        <dbReference type="Rhea" id="RHEA-COMP:10341"/>
        <dbReference type="Rhea" id="RHEA-COMP:10342"/>
        <dbReference type="ChEBI" id="CHEBI:16235"/>
        <dbReference type="ChEBI" id="CHEBI:58703"/>
        <dbReference type="ChEBI" id="CHEBI:74269"/>
        <dbReference type="ChEBI" id="CHEBI:82833"/>
        <dbReference type="EC" id="2.4.2.29"/>
    </reaction>
</comment>
<comment type="cofactor">
    <cofactor evidence="1">
        <name>Zn(2+)</name>
        <dbReference type="ChEBI" id="CHEBI:29105"/>
    </cofactor>
    <text evidence="1">Binds 1 zinc ion per subunit.</text>
</comment>
<comment type="pathway">
    <text evidence="1">tRNA modification; tRNA-queuosine biosynthesis.</text>
</comment>
<comment type="subunit">
    <text evidence="1">Homodimer. Within each dimer, one monomer is responsible for RNA recognition and catalysis, while the other monomer binds to the replacement base PreQ1.</text>
</comment>
<comment type="similarity">
    <text evidence="1">Belongs to the queuine tRNA-ribosyltransferase family.</text>
</comment>
<accession>C4XSI9</accession>
<reference key="1">
    <citation type="journal article" date="2009" name="Genome Res.">
        <title>Whole genome sequence of Desulfovibrio magneticus strain RS-1 revealed common gene clusters in magnetotactic bacteria.</title>
        <authorList>
            <person name="Nakazawa H."/>
            <person name="Arakaki A."/>
            <person name="Narita-Yamada S."/>
            <person name="Yashiro I."/>
            <person name="Jinno K."/>
            <person name="Aoki N."/>
            <person name="Tsuruyama A."/>
            <person name="Okamura Y."/>
            <person name="Tanikawa S."/>
            <person name="Fujita N."/>
            <person name="Takeyama H."/>
            <person name="Matsunaga T."/>
        </authorList>
    </citation>
    <scope>NUCLEOTIDE SEQUENCE [LARGE SCALE GENOMIC DNA]</scope>
    <source>
        <strain>ATCC 700980 / DSM 13731 / RS-1</strain>
    </source>
</reference>
<feature type="chain" id="PRO_1000203651" description="Queuine tRNA-ribosyltransferase">
    <location>
        <begin position="1"/>
        <end position="373"/>
    </location>
</feature>
<feature type="region of interest" description="RNA binding" evidence="1">
    <location>
        <begin position="249"/>
        <end position="255"/>
    </location>
</feature>
<feature type="region of interest" description="RNA binding; important for wobble base 34 recognition" evidence="1">
    <location>
        <begin position="273"/>
        <end position="277"/>
    </location>
</feature>
<feature type="active site" description="Proton acceptor" evidence="1">
    <location>
        <position position="93"/>
    </location>
</feature>
<feature type="active site" description="Nucleophile" evidence="1">
    <location>
        <position position="268"/>
    </location>
</feature>
<feature type="binding site" evidence="1">
    <location>
        <begin position="93"/>
        <end position="97"/>
    </location>
    <ligand>
        <name>substrate</name>
    </ligand>
</feature>
<feature type="binding site" evidence="1">
    <location>
        <position position="147"/>
    </location>
    <ligand>
        <name>substrate</name>
    </ligand>
</feature>
<feature type="binding site" evidence="1">
    <location>
        <position position="191"/>
    </location>
    <ligand>
        <name>substrate</name>
    </ligand>
</feature>
<feature type="binding site" evidence="1">
    <location>
        <position position="218"/>
    </location>
    <ligand>
        <name>substrate</name>
    </ligand>
</feature>
<feature type="binding site" evidence="1">
    <location>
        <position position="306"/>
    </location>
    <ligand>
        <name>Zn(2+)</name>
        <dbReference type="ChEBI" id="CHEBI:29105"/>
    </ligand>
</feature>
<feature type="binding site" evidence="1">
    <location>
        <position position="308"/>
    </location>
    <ligand>
        <name>Zn(2+)</name>
        <dbReference type="ChEBI" id="CHEBI:29105"/>
    </ligand>
</feature>
<feature type="binding site" evidence="1">
    <location>
        <position position="311"/>
    </location>
    <ligand>
        <name>Zn(2+)</name>
        <dbReference type="ChEBI" id="CHEBI:29105"/>
    </ligand>
</feature>
<feature type="binding site" evidence="1">
    <location>
        <position position="337"/>
    </location>
    <ligand>
        <name>Zn(2+)</name>
        <dbReference type="ChEBI" id="CHEBI:29105"/>
    </ligand>
</feature>
<dbReference type="EC" id="2.4.2.29" evidence="1"/>
<dbReference type="EMBL" id="AP010904">
    <property type="protein sequence ID" value="BAH75686.1"/>
    <property type="molecule type" value="Genomic_DNA"/>
</dbReference>
<dbReference type="RefSeq" id="WP_015860869.1">
    <property type="nucleotide sequence ID" value="NC_012796.1"/>
</dbReference>
<dbReference type="SMR" id="C4XSI9"/>
<dbReference type="STRING" id="573370.DMR_21950"/>
<dbReference type="KEGG" id="dma:DMR_21950"/>
<dbReference type="eggNOG" id="COG0343">
    <property type="taxonomic scope" value="Bacteria"/>
</dbReference>
<dbReference type="HOGENOM" id="CLU_022060_0_1_7"/>
<dbReference type="OrthoDB" id="9805417at2"/>
<dbReference type="UniPathway" id="UPA00392"/>
<dbReference type="Proteomes" id="UP000009071">
    <property type="component" value="Chromosome"/>
</dbReference>
<dbReference type="GO" id="GO:0005829">
    <property type="term" value="C:cytosol"/>
    <property type="evidence" value="ECO:0007669"/>
    <property type="project" value="TreeGrafter"/>
</dbReference>
<dbReference type="GO" id="GO:0046872">
    <property type="term" value="F:metal ion binding"/>
    <property type="evidence" value="ECO:0007669"/>
    <property type="project" value="UniProtKB-KW"/>
</dbReference>
<dbReference type="GO" id="GO:0008479">
    <property type="term" value="F:tRNA-guanosine(34) queuine transglycosylase activity"/>
    <property type="evidence" value="ECO:0007669"/>
    <property type="project" value="UniProtKB-UniRule"/>
</dbReference>
<dbReference type="GO" id="GO:0008616">
    <property type="term" value="P:queuosine biosynthetic process"/>
    <property type="evidence" value="ECO:0007669"/>
    <property type="project" value="UniProtKB-UniRule"/>
</dbReference>
<dbReference type="GO" id="GO:0002099">
    <property type="term" value="P:tRNA wobble guanine modification"/>
    <property type="evidence" value="ECO:0007669"/>
    <property type="project" value="TreeGrafter"/>
</dbReference>
<dbReference type="GO" id="GO:0101030">
    <property type="term" value="P:tRNA-guanine transglycosylation"/>
    <property type="evidence" value="ECO:0007669"/>
    <property type="project" value="InterPro"/>
</dbReference>
<dbReference type="FunFam" id="3.20.20.105:FF:000001">
    <property type="entry name" value="Queuine tRNA-ribosyltransferase"/>
    <property type="match status" value="1"/>
</dbReference>
<dbReference type="Gene3D" id="3.20.20.105">
    <property type="entry name" value="Queuine tRNA-ribosyltransferase-like"/>
    <property type="match status" value="1"/>
</dbReference>
<dbReference type="HAMAP" id="MF_00168">
    <property type="entry name" value="Q_tRNA_Tgt"/>
    <property type="match status" value="1"/>
</dbReference>
<dbReference type="InterPro" id="IPR050076">
    <property type="entry name" value="ArchSynthase1/Queuine_TRR"/>
</dbReference>
<dbReference type="InterPro" id="IPR004803">
    <property type="entry name" value="TGT"/>
</dbReference>
<dbReference type="InterPro" id="IPR036511">
    <property type="entry name" value="TGT-like_sf"/>
</dbReference>
<dbReference type="InterPro" id="IPR002616">
    <property type="entry name" value="tRNA_ribo_trans-like"/>
</dbReference>
<dbReference type="NCBIfam" id="TIGR00430">
    <property type="entry name" value="Q_tRNA_tgt"/>
    <property type="match status" value="1"/>
</dbReference>
<dbReference type="NCBIfam" id="TIGR00449">
    <property type="entry name" value="tgt_general"/>
    <property type="match status" value="1"/>
</dbReference>
<dbReference type="PANTHER" id="PTHR46499">
    <property type="entry name" value="QUEUINE TRNA-RIBOSYLTRANSFERASE"/>
    <property type="match status" value="1"/>
</dbReference>
<dbReference type="PANTHER" id="PTHR46499:SF1">
    <property type="entry name" value="QUEUINE TRNA-RIBOSYLTRANSFERASE"/>
    <property type="match status" value="1"/>
</dbReference>
<dbReference type="Pfam" id="PF01702">
    <property type="entry name" value="TGT"/>
    <property type="match status" value="1"/>
</dbReference>
<dbReference type="SUPFAM" id="SSF51713">
    <property type="entry name" value="tRNA-guanine transglycosylase"/>
    <property type="match status" value="1"/>
</dbReference>
<proteinExistence type="inferred from homology"/>
<keyword id="KW-0328">Glycosyltransferase</keyword>
<keyword id="KW-0479">Metal-binding</keyword>
<keyword id="KW-0671">Queuosine biosynthesis</keyword>
<keyword id="KW-0808">Transferase</keyword>
<keyword id="KW-0819">tRNA processing</keyword>
<keyword id="KW-0862">Zinc</keyword>
<gene>
    <name evidence="1" type="primary">tgt</name>
    <name type="ordered locus">DMR_21950</name>
</gene>
<evidence type="ECO:0000255" key="1">
    <source>
        <dbReference type="HAMAP-Rule" id="MF_00168"/>
    </source>
</evidence>
<protein>
    <recommendedName>
        <fullName evidence="1">Queuine tRNA-ribosyltransferase</fullName>
        <ecNumber evidence="1">2.4.2.29</ecNumber>
    </recommendedName>
    <alternativeName>
        <fullName evidence="1">Guanine insertion enzyme</fullName>
    </alternativeName>
    <alternativeName>
        <fullName evidence="1">tRNA-guanine transglycosylase</fullName>
    </alternativeName>
</protein>